<feature type="chain" id="PRO_0000106810" description="Uncharacterized protein MJ0340">
    <location>
        <begin position="1"/>
        <end position="234"/>
    </location>
</feature>
<name>Y340_METJA</name>
<gene>
    <name type="ordered locus">MJ0340</name>
</gene>
<reference key="1">
    <citation type="journal article" date="1996" name="Science">
        <title>Complete genome sequence of the methanogenic archaeon, Methanococcus jannaschii.</title>
        <authorList>
            <person name="Bult C.J."/>
            <person name="White O."/>
            <person name="Olsen G.J."/>
            <person name="Zhou L."/>
            <person name="Fleischmann R.D."/>
            <person name="Sutton G.G."/>
            <person name="Blake J.A."/>
            <person name="FitzGerald L.M."/>
            <person name="Clayton R.A."/>
            <person name="Gocayne J.D."/>
            <person name="Kerlavage A.R."/>
            <person name="Dougherty B.A."/>
            <person name="Tomb J.-F."/>
            <person name="Adams M.D."/>
            <person name="Reich C.I."/>
            <person name="Overbeek R."/>
            <person name="Kirkness E.F."/>
            <person name="Weinstock K.G."/>
            <person name="Merrick J.M."/>
            <person name="Glodek A."/>
            <person name="Scott J.L."/>
            <person name="Geoghagen N.S.M."/>
            <person name="Weidman J.F."/>
            <person name="Fuhrmann J.L."/>
            <person name="Nguyen D."/>
            <person name="Utterback T.R."/>
            <person name="Kelley J.M."/>
            <person name="Peterson J.D."/>
            <person name="Sadow P.W."/>
            <person name="Hanna M.C."/>
            <person name="Cotton M.D."/>
            <person name="Roberts K.M."/>
            <person name="Hurst M.A."/>
            <person name="Kaine B.P."/>
            <person name="Borodovsky M."/>
            <person name="Klenk H.-P."/>
            <person name="Fraser C.M."/>
            <person name="Smith H.O."/>
            <person name="Woese C.R."/>
            <person name="Venter J.C."/>
        </authorList>
    </citation>
    <scope>NUCLEOTIDE SEQUENCE [LARGE SCALE GENOMIC DNA]</scope>
    <source>
        <strain>ATCC 43067 / DSM 2661 / JAL-1 / JCM 10045 / NBRC 100440</strain>
    </source>
</reference>
<dbReference type="EMBL" id="L77117">
    <property type="protein sequence ID" value="AAB98328.1"/>
    <property type="molecule type" value="Genomic_DNA"/>
</dbReference>
<dbReference type="PIR" id="D64342">
    <property type="entry name" value="D64342"/>
</dbReference>
<dbReference type="RefSeq" id="WP_010869838.1">
    <property type="nucleotide sequence ID" value="NC_000909.1"/>
</dbReference>
<dbReference type="FunCoup" id="Q57786">
    <property type="interactions" value="9"/>
</dbReference>
<dbReference type="STRING" id="243232.MJ_0340"/>
<dbReference type="PaxDb" id="243232-MJ_0340"/>
<dbReference type="EnsemblBacteria" id="AAB98328">
    <property type="protein sequence ID" value="AAB98328"/>
    <property type="gene ID" value="MJ_0340"/>
</dbReference>
<dbReference type="GeneID" id="1451196"/>
<dbReference type="KEGG" id="mja:MJ_0340"/>
<dbReference type="eggNOG" id="arCOG09645">
    <property type="taxonomic scope" value="Archaea"/>
</dbReference>
<dbReference type="HOGENOM" id="CLU_1182899_0_0_2"/>
<dbReference type="InParanoid" id="Q57786"/>
<dbReference type="OrthoDB" id="61992at2157"/>
<dbReference type="Proteomes" id="UP000000805">
    <property type="component" value="Chromosome"/>
</dbReference>
<keyword id="KW-1185">Reference proteome</keyword>
<proteinExistence type="predicted"/>
<accession>Q57786</accession>
<sequence>MVLSLTPPSQENILASGKLAYFGAKSQVDTFTGDEQNDTFELTKDDAVLGSEIVKVNGVLQFEGQDYTAIHENGILKKIKFTQPPANGASITVEYLYLDLPLGGASELSVKEDKDKEELTVDCSYGKIQIEKGSSITLSFKDIITVGDIKLTAYFSGEILEGNTYSKYKNGASKSANIVVLAFSKEATMAYGVEPPKRIVIIRGAMPNNLEFDWSGGSKSFDLTAQSYEIIDVK</sequence>
<organism>
    <name type="scientific">Methanocaldococcus jannaschii (strain ATCC 43067 / DSM 2661 / JAL-1 / JCM 10045 / NBRC 100440)</name>
    <name type="common">Methanococcus jannaschii</name>
    <dbReference type="NCBI Taxonomy" id="243232"/>
    <lineage>
        <taxon>Archaea</taxon>
        <taxon>Methanobacteriati</taxon>
        <taxon>Methanobacteriota</taxon>
        <taxon>Methanomada group</taxon>
        <taxon>Methanococci</taxon>
        <taxon>Methanococcales</taxon>
        <taxon>Methanocaldococcaceae</taxon>
        <taxon>Methanocaldococcus</taxon>
    </lineage>
</organism>
<protein>
    <recommendedName>
        <fullName>Uncharacterized protein MJ0340</fullName>
    </recommendedName>
</protein>